<proteinExistence type="inferred from homology"/>
<accession>A9IT56</accession>
<protein>
    <recommendedName>
        <fullName evidence="1">UPF0761 membrane protein Bpet3042</fullName>
    </recommendedName>
</protein>
<comment type="subcellular location">
    <subcellularLocation>
        <location evidence="1">Cell inner membrane</location>
        <topology evidence="1">Multi-pass membrane protein</topology>
    </subcellularLocation>
</comment>
<comment type="similarity">
    <text evidence="1">Belongs to the UPF0761 family.</text>
</comment>
<keyword id="KW-0997">Cell inner membrane</keyword>
<keyword id="KW-1003">Cell membrane</keyword>
<keyword id="KW-0472">Membrane</keyword>
<keyword id="KW-0812">Transmembrane</keyword>
<keyword id="KW-1133">Transmembrane helix</keyword>
<name>Y3042_BORPD</name>
<organism>
    <name type="scientific">Bordetella petrii (strain ATCC BAA-461 / DSM 12804 / CCUG 43448)</name>
    <dbReference type="NCBI Taxonomy" id="340100"/>
    <lineage>
        <taxon>Bacteria</taxon>
        <taxon>Pseudomonadati</taxon>
        <taxon>Pseudomonadota</taxon>
        <taxon>Betaproteobacteria</taxon>
        <taxon>Burkholderiales</taxon>
        <taxon>Alcaligenaceae</taxon>
        <taxon>Bordetella</taxon>
    </lineage>
</organism>
<sequence length="452" mass="49054">MSHSAGPGAAQPATAAAPRQRTPWITRVGRVFRFAAQRADEEKLLQVASSLTFTTVLGIVPMLAVVLSLFTAFPVFQDFRLALEDFLANSLMPPAVSDNIMDYLNQFAYQASRLTAIGGAFLVVTSLLLIMTIDKTFNDIWHVTRQRPLPQRALVYWAVVTLGPVVAGASLWATSFLARESLGLVRDVPEIVSLAISFLPLILTGLGFAALFVVVPNRHVYWRDALVGGFGTAIVLELMKAAFAYYLTRFPTYTVIYGAFATLPIFLLWIYLSWLAVLFGATVAASAPLIRLGRWEINRSPGAPFIDALAVLRALHAAQGMRPAGRSASALAKRLHLHHDELNAVLEKLENLGLAARTAEQRWILACDPRSTTLEPVFDNFLLDRHQPRLRDDPQVVQAAAAVLGQDGGQAPTLEELAGLAHNTPVGLAAIVPLEAGKNSRRGPHAPGESSC</sequence>
<evidence type="ECO:0000255" key="1">
    <source>
        <dbReference type="HAMAP-Rule" id="MF_00672"/>
    </source>
</evidence>
<gene>
    <name type="ordered locus">Bpet3042</name>
</gene>
<dbReference type="EMBL" id="AM902716">
    <property type="protein sequence ID" value="CAP43384.1"/>
    <property type="molecule type" value="Genomic_DNA"/>
</dbReference>
<dbReference type="SMR" id="A9IT56"/>
<dbReference type="STRING" id="94624.Bpet3042"/>
<dbReference type="KEGG" id="bpt:Bpet3042"/>
<dbReference type="eggNOG" id="COG1295">
    <property type="taxonomic scope" value="Bacteria"/>
</dbReference>
<dbReference type="Proteomes" id="UP000001225">
    <property type="component" value="Chromosome"/>
</dbReference>
<dbReference type="GO" id="GO:0005886">
    <property type="term" value="C:plasma membrane"/>
    <property type="evidence" value="ECO:0007669"/>
    <property type="project" value="UniProtKB-SubCell"/>
</dbReference>
<dbReference type="HAMAP" id="MF_00672">
    <property type="entry name" value="UPF0761"/>
    <property type="match status" value="1"/>
</dbReference>
<dbReference type="InterPro" id="IPR023679">
    <property type="entry name" value="UPF0761_bac"/>
</dbReference>
<dbReference type="InterPro" id="IPR017039">
    <property type="entry name" value="Virul_fac_BrkB"/>
</dbReference>
<dbReference type="NCBIfam" id="TIGR00765">
    <property type="entry name" value="yihY_not_rbn"/>
    <property type="match status" value="1"/>
</dbReference>
<dbReference type="PANTHER" id="PTHR30213">
    <property type="entry name" value="INNER MEMBRANE PROTEIN YHJD"/>
    <property type="match status" value="1"/>
</dbReference>
<dbReference type="PANTHER" id="PTHR30213:SF0">
    <property type="entry name" value="UPF0761 MEMBRANE PROTEIN YIHY"/>
    <property type="match status" value="1"/>
</dbReference>
<dbReference type="Pfam" id="PF03631">
    <property type="entry name" value="Virul_fac_BrkB"/>
    <property type="match status" value="1"/>
</dbReference>
<feature type="chain" id="PRO_0000391022" description="UPF0761 membrane protein Bpet3042">
    <location>
        <begin position="1"/>
        <end position="452"/>
    </location>
</feature>
<feature type="transmembrane region" description="Helical" evidence="1">
    <location>
        <begin position="56"/>
        <end position="76"/>
    </location>
</feature>
<feature type="transmembrane region" description="Helical" evidence="1">
    <location>
        <begin position="114"/>
        <end position="134"/>
    </location>
</feature>
<feature type="transmembrane region" description="Helical" evidence="1">
    <location>
        <begin position="153"/>
        <end position="173"/>
    </location>
</feature>
<feature type="transmembrane region" description="Helical" evidence="1">
    <location>
        <begin position="195"/>
        <end position="215"/>
    </location>
</feature>
<feature type="transmembrane region" description="Helical" evidence="1">
    <location>
        <begin position="225"/>
        <end position="245"/>
    </location>
</feature>
<feature type="transmembrane region" description="Helical" evidence="1">
    <location>
        <begin position="259"/>
        <end position="279"/>
    </location>
</feature>
<reference key="1">
    <citation type="journal article" date="2008" name="BMC Genomics">
        <title>The missing link: Bordetella petrii is endowed with both the metabolic versatility of environmental bacteria and virulence traits of pathogenic Bordetellae.</title>
        <authorList>
            <person name="Gross R."/>
            <person name="Guzman C.A."/>
            <person name="Sebaihia M."/>
            <person name="Martin dos Santos V.A.P."/>
            <person name="Pieper D.H."/>
            <person name="Koebnik R."/>
            <person name="Lechner M."/>
            <person name="Bartels D."/>
            <person name="Buhrmester J."/>
            <person name="Choudhuri J.V."/>
            <person name="Ebensen T."/>
            <person name="Gaigalat L."/>
            <person name="Herrmann S."/>
            <person name="Khachane A.N."/>
            <person name="Larisch C."/>
            <person name="Link S."/>
            <person name="Linke B."/>
            <person name="Meyer F."/>
            <person name="Mormann S."/>
            <person name="Nakunst D."/>
            <person name="Rueckert C."/>
            <person name="Schneiker-Bekel S."/>
            <person name="Schulze K."/>
            <person name="Voerholter F.-J."/>
            <person name="Yevsa T."/>
            <person name="Engle J.T."/>
            <person name="Goldman W.E."/>
            <person name="Puehler A."/>
            <person name="Goebel U.B."/>
            <person name="Goesmann A."/>
            <person name="Bloecker H."/>
            <person name="Kaiser O."/>
            <person name="Martinez-Arias R."/>
        </authorList>
    </citation>
    <scope>NUCLEOTIDE SEQUENCE [LARGE SCALE GENOMIC DNA]</scope>
    <source>
        <strain>ATCC BAA-461 / DSM 12804 / CCUG 43448</strain>
    </source>
</reference>